<dbReference type="EMBL" id="CP000102">
    <property type="protein sequence ID" value="ABC56998.1"/>
    <property type="molecule type" value="Genomic_DNA"/>
</dbReference>
<dbReference type="RefSeq" id="WP_011406198.1">
    <property type="nucleotide sequence ID" value="NC_007681.1"/>
</dbReference>
<dbReference type="SMR" id="Q2NGQ5"/>
<dbReference type="STRING" id="339860.Msp_0600"/>
<dbReference type="GeneID" id="41325175"/>
<dbReference type="KEGG" id="mst:Msp_0600"/>
<dbReference type="eggNOG" id="arCOG01341">
    <property type="taxonomic scope" value="Archaea"/>
</dbReference>
<dbReference type="HOGENOM" id="CLU_091867_1_1_2"/>
<dbReference type="OrthoDB" id="10045at2157"/>
<dbReference type="Proteomes" id="UP000001931">
    <property type="component" value="Chromosome"/>
</dbReference>
<dbReference type="GO" id="GO:0005737">
    <property type="term" value="C:cytoplasm"/>
    <property type="evidence" value="ECO:0007669"/>
    <property type="project" value="UniProtKB-SubCell"/>
</dbReference>
<dbReference type="GO" id="GO:0016272">
    <property type="term" value="C:prefoldin complex"/>
    <property type="evidence" value="ECO:0007669"/>
    <property type="project" value="UniProtKB-UniRule"/>
</dbReference>
<dbReference type="GO" id="GO:0051082">
    <property type="term" value="F:unfolded protein binding"/>
    <property type="evidence" value="ECO:0007669"/>
    <property type="project" value="UniProtKB-UniRule"/>
</dbReference>
<dbReference type="GO" id="GO:0006457">
    <property type="term" value="P:protein folding"/>
    <property type="evidence" value="ECO:0007669"/>
    <property type="project" value="UniProtKB-UniRule"/>
</dbReference>
<dbReference type="CDD" id="cd23160">
    <property type="entry name" value="Prefoldin_alpha_GimC"/>
    <property type="match status" value="1"/>
</dbReference>
<dbReference type="Gene3D" id="1.10.287.370">
    <property type="match status" value="1"/>
</dbReference>
<dbReference type="HAMAP" id="MF_00308">
    <property type="entry name" value="PfdA"/>
    <property type="match status" value="1"/>
</dbReference>
<dbReference type="InterPro" id="IPR011599">
    <property type="entry name" value="PFD_alpha_archaea"/>
</dbReference>
<dbReference type="InterPro" id="IPR009053">
    <property type="entry name" value="Prefoldin"/>
</dbReference>
<dbReference type="InterPro" id="IPR004127">
    <property type="entry name" value="Prefoldin_subunit_alpha"/>
</dbReference>
<dbReference type="NCBIfam" id="TIGR00293">
    <property type="entry name" value="prefoldin subunit alpha"/>
    <property type="match status" value="1"/>
</dbReference>
<dbReference type="Pfam" id="PF02996">
    <property type="entry name" value="Prefoldin"/>
    <property type="match status" value="1"/>
</dbReference>
<dbReference type="SUPFAM" id="SSF46579">
    <property type="entry name" value="Prefoldin"/>
    <property type="match status" value="1"/>
</dbReference>
<proteinExistence type="inferred from homology"/>
<evidence type="ECO:0000255" key="1">
    <source>
        <dbReference type="HAMAP-Rule" id="MF_00308"/>
    </source>
</evidence>
<evidence type="ECO:0000305" key="2"/>
<accession>Q2NGQ5</accession>
<sequence>MEDRQKLEQMVTEINQLQQQGETITQQIEQLNQSLADITTAQEAVKGIKNATGKQTLVPIGAGCFIETELKSEDIIVGVGSDVAIKRSREETEKTLQTDKEEVQKLIGSLTEQLQKINEYIAQKRPEAERLMKETGVQ</sequence>
<organism>
    <name type="scientific">Methanosphaera stadtmanae (strain ATCC 43021 / DSM 3091 / JCM 11832 / MCB-3)</name>
    <dbReference type="NCBI Taxonomy" id="339860"/>
    <lineage>
        <taxon>Archaea</taxon>
        <taxon>Methanobacteriati</taxon>
        <taxon>Methanobacteriota</taxon>
        <taxon>Methanomada group</taxon>
        <taxon>Methanobacteria</taxon>
        <taxon>Methanobacteriales</taxon>
        <taxon>Methanobacteriaceae</taxon>
        <taxon>Methanosphaera</taxon>
    </lineage>
</organism>
<feature type="chain" id="PRO_0000300766" description="Prefoldin subunit alpha">
    <location>
        <begin position="1"/>
        <end position="138"/>
    </location>
</feature>
<name>PFDA_METST</name>
<gene>
    <name evidence="1" type="primary">pfdA</name>
    <name type="ordered locus">Msp_0600</name>
</gene>
<reference key="1">
    <citation type="journal article" date="2006" name="J. Bacteriol.">
        <title>The genome sequence of Methanosphaera stadtmanae reveals why this human intestinal archaeon is restricted to methanol and H2 for methane formation and ATP synthesis.</title>
        <authorList>
            <person name="Fricke W.F."/>
            <person name="Seedorf H."/>
            <person name="Henne A."/>
            <person name="Kruer M."/>
            <person name="Liesegang H."/>
            <person name="Hedderich R."/>
            <person name="Gottschalk G."/>
            <person name="Thauer R.K."/>
        </authorList>
    </citation>
    <scope>NUCLEOTIDE SEQUENCE [LARGE SCALE GENOMIC DNA]</scope>
    <source>
        <strain>ATCC 43021 / DSM 3091 / JCM 11832 / MCB-3</strain>
    </source>
</reference>
<protein>
    <recommendedName>
        <fullName evidence="1">Prefoldin subunit alpha</fullName>
    </recommendedName>
    <alternativeName>
        <fullName evidence="1">GimC subunit alpha</fullName>
    </alternativeName>
</protein>
<keyword id="KW-0143">Chaperone</keyword>
<keyword id="KW-0963">Cytoplasm</keyword>
<keyword id="KW-1185">Reference proteome</keyword>
<comment type="function">
    <text evidence="1">Molecular chaperone capable of stabilizing a range of proteins. Seems to fulfill an ATP-independent, HSP70-like function in archaeal de novo protein folding.</text>
</comment>
<comment type="subunit">
    <text evidence="1">Heterohexamer of two alpha and four beta subunits.</text>
</comment>
<comment type="subcellular location">
    <subcellularLocation>
        <location evidence="1">Cytoplasm</location>
    </subcellularLocation>
</comment>
<comment type="similarity">
    <text evidence="2">Belongs to the prefoldin subunit alpha family.</text>
</comment>